<comment type="function">
    <text evidence="1">Murein-degrading enzyme that degrades murein glycan strands and insoluble, high-molecular weight murein sacculi, with the concomitant formation of a 1,6-anhydromuramoyl product. Lytic transglycosylases (LTs) play an integral role in the metabolism of the peptidoglycan (PG) sacculus. Their lytic action creates space within the PG sacculus to allow for its expansion as well as for the insertion of various structures such as secretion systems and flagella.</text>
</comment>
<comment type="catalytic activity">
    <reaction evidence="1">
        <text>Exolytic cleavage of the (1-&gt;4)-beta-glycosidic linkage between N-acetylmuramic acid (MurNAc) and N-acetylglucosamine (GlcNAc) residues in peptidoglycan, from either the reducing or the non-reducing ends of the peptidoglycan chains, with concomitant formation of a 1,6-anhydrobond in the MurNAc residue.</text>
        <dbReference type="EC" id="4.2.2.n1"/>
    </reaction>
</comment>
<comment type="subcellular location">
    <subcellularLocation>
        <location>Cell outer membrane</location>
        <topology>Peripheral membrane protein</topology>
    </subcellularLocation>
    <text evidence="1">Attached to the inner leaflet of the outer membrane.</text>
</comment>
<comment type="domain">
    <text evidence="1">The N-terminal domain does not have lytic activity and probably modulates enzymatic activity. The C-terminal domain is the catalytic active domain.</text>
</comment>
<comment type="similarity">
    <text evidence="1">In the N-terminal section; belongs to the bacterial solute-binding protein 3 family.</text>
</comment>
<comment type="similarity">
    <text evidence="1">In the C-terminal section; belongs to the transglycosylase Slt family.</text>
</comment>
<comment type="sequence caution" evidence="2">
    <conflict type="erroneous initiation">
        <sequence resource="EMBL-CDS" id="ABG17547"/>
    </conflict>
</comment>
<feature type="signal peptide" evidence="1">
    <location>
        <begin position="1"/>
        <end position="21"/>
    </location>
</feature>
<feature type="chain" id="PRO_0000354001" description="Membrane-bound lytic murein transglycosylase F">
    <location>
        <begin position="22"/>
        <end position="486"/>
    </location>
</feature>
<feature type="region of interest" description="Non-LT domain" evidence="1">
    <location>
        <begin position="22"/>
        <end position="268"/>
    </location>
</feature>
<feature type="region of interest" description="LT domain" evidence="1">
    <location>
        <begin position="269"/>
        <end position="486"/>
    </location>
</feature>
<feature type="active site" evidence="1">
    <location>
        <position position="313"/>
    </location>
</feature>
<sequence length="486" mass="54808">MTRIKLSYFTIGLVALLLALALWPNIPWRNGQEGQLDQIKARGELRVSTISSPLIYSTEKDTPSGFDYELAKRFADYLGVKLVIIPHHNIDDLFDALDNDDTDLLAAGLIYNRERLNRARTGPAYYSVSQQLVYRLGSPRPKSFSDLKGQVVVASGSAHMTTLKRLKQTKYPELNWSSSVDKSGKELLEQVAEGKLDYTLGDSATIALLQRIHPQLAVAFDVTDEEPVTWYFKQSDDDSLYAAMLDFYSEMVEDGSLARLEEKYLGHVGSFDYVDTKTFLSAIDNVLPSYQHLFEKHAGDIDWKLLAVIAYQESHWNPQATSPTGVRGLMMLTRATADGLGVKDRVDPEESIRGGAIYLQRLMKKLPETIPEDERIWFALAAYNLGYGHMLDARRLTKNQNGNPDSWVDVKMRLPMLSQKRYYPSTTYGYARGHEAYNYVENIRRYQVSLVGYLQEKEKKAAQHAAIEAELGKSNPVVGPGWSIGD</sequence>
<organism>
    <name type="scientific">Yersinia pestis bv. Antiqua (strain Nepal516)</name>
    <dbReference type="NCBI Taxonomy" id="377628"/>
    <lineage>
        <taxon>Bacteria</taxon>
        <taxon>Pseudomonadati</taxon>
        <taxon>Pseudomonadota</taxon>
        <taxon>Gammaproteobacteria</taxon>
        <taxon>Enterobacterales</taxon>
        <taxon>Yersiniaceae</taxon>
        <taxon>Yersinia</taxon>
    </lineage>
</organism>
<gene>
    <name evidence="1" type="primary">mltF</name>
    <name type="ordered locus">YPN_1217</name>
    <name type="ORF">YP516_1331</name>
</gene>
<evidence type="ECO:0000255" key="1">
    <source>
        <dbReference type="HAMAP-Rule" id="MF_02016"/>
    </source>
</evidence>
<evidence type="ECO:0000305" key="2"/>
<proteinExistence type="inferred from homology"/>
<reference key="1">
    <citation type="journal article" date="2006" name="J. Bacteriol.">
        <title>Complete genome sequence of Yersinia pestis strains Antiqua and Nepal516: evidence of gene reduction in an emerging pathogen.</title>
        <authorList>
            <person name="Chain P.S.G."/>
            <person name="Hu P."/>
            <person name="Malfatti S.A."/>
            <person name="Radnedge L."/>
            <person name="Larimer F."/>
            <person name="Vergez L.M."/>
            <person name="Worsham P."/>
            <person name="Chu M.C."/>
            <person name="Andersen G.L."/>
        </authorList>
    </citation>
    <scope>NUCLEOTIDE SEQUENCE [LARGE SCALE GENOMIC DNA]</scope>
    <source>
        <strain>Nepal516</strain>
    </source>
</reference>
<reference key="2">
    <citation type="submission" date="2009-04" db="EMBL/GenBank/DDBJ databases">
        <title>Yersinia pestis Nepal516A whole genome shotgun sequencing project.</title>
        <authorList>
            <person name="Plunkett G. III"/>
            <person name="Anderson B.D."/>
            <person name="Baumler D.J."/>
            <person name="Burland V."/>
            <person name="Cabot E.L."/>
            <person name="Glasner J.D."/>
            <person name="Mau B."/>
            <person name="Neeno-Eckwall E."/>
            <person name="Perna N.T."/>
            <person name="Munk A.C."/>
            <person name="Tapia R."/>
            <person name="Green L.D."/>
            <person name="Rogers Y.C."/>
            <person name="Detter J.C."/>
            <person name="Bruce D.C."/>
            <person name="Brettin T.S."/>
        </authorList>
    </citation>
    <scope>NUCLEOTIDE SEQUENCE [LARGE SCALE GENOMIC DNA]</scope>
    <source>
        <strain>Nepal516</strain>
    </source>
</reference>
<name>MLTF_YERPN</name>
<protein>
    <recommendedName>
        <fullName evidence="1">Membrane-bound lytic murein transglycosylase F</fullName>
        <ecNumber evidence="1">4.2.2.n1</ecNumber>
    </recommendedName>
    <alternativeName>
        <fullName evidence="1">Murein lyase F</fullName>
    </alternativeName>
</protein>
<keyword id="KW-0998">Cell outer membrane</keyword>
<keyword id="KW-0961">Cell wall biogenesis/degradation</keyword>
<keyword id="KW-0456">Lyase</keyword>
<keyword id="KW-0472">Membrane</keyword>
<keyword id="KW-0732">Signal</keyword>
<dbReference type="EC" id="4.2.2.n1" evidence="1"/>
<dbReference type="EMBL" id="CP000305">
    <property type="protein sequence ID" value="ABG17547.1"/>
    <property type="status" value="ALT_INIT"/>
    <property type="molecule type" value="Genomic_DNA"/>
</dbReference>
<dbReference type="EMBL" id="ACNQ01000008">
    <property type="protein sequence ID" value="EEO77653.1"/>
    <property type="molecule type" value="Genomic_DNA"/>
</dbReference>
<dbReference type="RefSeq" id="WP_002211562.1">
    <property type="nucleotide sequence ID" value="NZ_ACNQ01000008.1"/>
</dbReference>
<dbReference type="SMR" id="Q1CKD3"/>
<dbReference type="CAZy" id="GH23">
    <property type="family name" value="Glycoside Hydrolase Family 23"/>
</dbReference>
<dbReference type="GeneID" id="57975876"/>
<dbReference type="KEGG" id="ypn:YPN_1217"/>
<dbReference type="HOGENOM" id="CLU_027494_0_1_6"/>
<dbReference type="Proteomes" id="UP000008936">
    <property type="component" value="Chromosome"/>
</dbReference>
<dbReference type="GO" id="GO:0009279">
    <property type="term" value="C:cell outer membrane"/>
    <property type="evidence" value="ECO:0007669"/>
    <property type="project" value="UniProtKB-SubCell"/>
</dbReference>
<dbReference type="GO" id="GO:0008933">
    <property type="term" value="F:peptidoglycan lytic transglycosylase activity"/>
    <property type="evidence" value="ECO:0007669"/>
    <property type="project" value="UniProtKB-UniRule"/>
</dbReference>
<dbReference type="GO" id="GO:0016998">
    <property type="term" value="P:cell wall macromolecule catabolic process"/>
    <property type="evidence" value="ECO:0007669"/>
    <property type="project" value="UniProtKB-UniRule"/>
</dbReference>
<dbReference type="GO" id="GO:0071555">
    <property type="term" value="P:cell wall organization"/>
    <property type="evidence" value="ECO:0007669"/>
    <property type="project" value="UniProtKB-KW"/>
</dbReference>
<dbReference type="GO" id="GO:0009253">
    <property type="term" value="P:peptidoglycan catabolic process"/>
    <property type="evidence" value="ECO:0007669"/>
    <property type="project" value="TreeGrafter"/>
</dbReference>
<dbReference type="CDD" id="cd13403">
    <property type="entry name" value="MLTF-like"/>
    <property type="match status" value="1"/>
</dbReference>
<dbReference type="CDD" id="cd01009">
    <property type="entry name" value="PBP2_YfhD_N"/>
    <property type="match status" value="1"/>
</dbReference>
<dbReference type="FunFam" id="1.10.530.10:FF:000003">
    <property type="entry name" value="Membrane-bound lytic murein transglycosylase F"/>
    <property type="match status" value="1"/>
</dbReference>
<dbReference type="Gene3D" id="1.10.530.10">
    <property type="match status" value="1"/>
</dbReference>
<dbReference type="Gene3D" id="3.40.190.10">
    <property type="entry name" value="Periplasmic binding protein-like II"/>
    <property type="match status" value="2"/>
</dbReference>
<dbReference type="HAMAP" id="MF_02016">
    <property type="entry name" value="MltF"/>
    <property type="match status" value="1"/>
</dbReference>
<dbReference type="InterPro" id="IPR023346">
    <property type="entry name" value="Lysozyme-like_dom_sf"/>
</dbReference>
<dbReference type="InterPro" id="IPR023703">
    <property type="entry name" value="MltF"/>
</dbReference>
<dbReference type="InterPro" id="IPR001638">
    <property type="entry name" value="Solute-binding_3/MltF_N"/>
</dbReference>
<dbReference type="InterPro" id="IPR000189">
    <property type="entry name" value="Transglyc_AS"/>
</dbReference>
<dbReference type="InterPro" id="IPR008258">
    <property type="entry name" value="Transglycosylase_SLT_dom_1"/>
</dbReference>
<dbReference type="NCBIfam" id="NF008112">
    <property type="entry name" value="PRK10859.1"/>
    <property type="match status" value="1"/>
</dbReference>
<dbReference type="PANTHER" id="PTHR35936">
    <property type="entry name" value="MEMBRANE-BOUND LYTIC MUREIN TRANSGLYCOSYLASE F"/>
    <property type="match status" value="1"/>
</dbReference>
<dbReference type="PANTHER" id="PTHR35936:SF32">
    <property type="entry name" value="MEMBRANE-BOUND LYTIC MUREIN TRANSGLYCOSYLASE F"/>
    <property type="match status" value="1"/>
</dbReference>
<dbReference type="Pfam" id="PF00497">
    <property type="entry name" value="SBP_bac_3"/>
    <property type="match status" value="1"/>
</dbReference>
<dbReference type="Pfam" id="PF01464">
    <property type="entry name" value="SLT"/>
    <property type="match status" value="1"/>
</dbReference>
<dbReference type="SMART" id="SM00062">
    <property type="entry name" value="PBPb"/>
    <property type="match status" value="1"/>
</dbReference>
<dbReference type="SUPFAM" id="SSF53955">
    <property type="entry name" value="Lysozyme-like"/>
    <property type="match status" value="1"/>
</dbReference>
<dbReference type="SUPFAM" id="SSF53850">
    <property type="entry name" value="Periplasmic binding protein-like II"/>
    <property type="match status" value="1"/>
</dbReference>
<dbReference type="PROSITE" id="PS00922">
    <property type="entry name" value="TRANSGLYCOSYLASE"/>
    <property type="match status" value="1"/>
</dbReference>
<accession>Q1CKD3</accession>
<accession>C4GRG2</accession>